<evidence type="ECO:0000255" key="1">
    <source>
        <dbReference type="HAMAP-Rule" id="MF_01411"/>
    </source>
</evidence>
<evidence type="ECO:0000256" key="2">
    <source>
        <dbReference type="SAM" id="MobiDB-lite"/>
    </source>
</evidence>
<keyword id="KW-0998">Cell outer membrane</keyword>
<keyword id="KW-0472">Membrane</keyword>
<keyword id="KW-0732">Signal</keyword>
<proteinExistence type="inferred from homology"/>
<name>LPTD_BURL3</name>
<comment type="function">
    <text evidence="1">Together with LptE, is involved in the assembly of lipopolysaccharide (LPS) at the surface of the outer membrane.</text>
</comment>
<comment type="subunit">
    <text evidence="1">Component of the lipopolysaccharide transport and assembly complex. Interacts with LptE and LptA.</text>
</comment>
<comment type="subcellular location">
    <subcellularLocation>
        <location evidence="1">Cell outer membrane</location>
    </subcellularLocation>
</comment>
<comment type="similarity">
    <text evidence="1">Belongs to the LptD family.</text>
</comment>
<protein>
    <recommendedName>
        <fullName evidence="1">LPS-assembly protein LptD</fullName>
    </recommendedName>
</protein>
<organism>
    <name type="scientific">Burkholderia lata (strain ATCC 17760 / DSM 23089 / LMG 22485 / NCIMB 9086 / R18194 / 383)</name>
    <dbReference type="NCBI Taxonomy" id="482957"/>
    <lineage>
        <taxon>Bacteria</taxon>
        <taxon>Pseudomonadati</taxon>
        <taxon>Pseudomonadota</taxon>
        <taxon>Betaproteobacteria</taxon>
        <taxon>Burkholderiales</taxon>
        <taxon>Burkholderiaceae</taxon>
        <taxon>Burkholderia</taxon>
        <taxon>Burkholderia cepacia complex</taxon>
    </lineage>
</organism>
<reference key="1">
    <citation type="submission" date="2005-10" db="EMBL/GenBank/DDBJ databases">
        <title>Complete sequence of chromosome 1 of Burkholderia sp. 383.</title>
        <authorList>
            <consortium name="US DOE Joint Genome Institute"/>
            <person name="Copeland A."/>
            <person name="Lucas S."/>
            <person name="Lapidus A."/>
            <person name="Barry K."/>
            <person name="Detter J.C."/>
            <person name="Glavina T."/>
            <person name="Hammon N."/>
            <person name="Israni S."/>
            <person name="Pitluck S."/>
            <person name="Chain P."/>
            <person name="Malfatti S."/>
            <person name="Shin M."/>
            <person name="Vergez L."/>
            <person name="Schmutz J."/>
            <person name="Larimer F."/>
            <person name="Land M."/>
            <person name="Kyrpides N."/>
            <person name="Lykidis A."/>
            <person name="Richardson P."/>
        </authorList>
    </citation>
    <scope>NUCLEOTIDE SEQUENCE [LARGE SCALE GENOMIC DNA]</scope>
    <source>
        <strain>ATCC 17760 / DSM 23089 / LMG 22485 / NCIMB 9086 / R18194 / 383</strain>
    </source>
</reference>
<sequence length="786" mass="87034">MPPKPLFPNVFPGDGAPRKRRLALALLAVPGLVPAVSYAQLSGAAAQPQPLDSPWDLRLAPQLEDRPLKDGAKPAAFVIADHTSGTAEQDLAAKGSAELRRGDVVVKADAIHYDQDTDMADAYGQVRINNSGTSFAGPEAHLKIEANQGFMTAPKYHFNMTGGSGSAERVDMVDNERSVFVNGTYTACQCSTNPAWYIKGSRFDFDTGADEGTARNGVLFFQGVPIFASPWMTFPLSGERRSGLLPPTFAMNSSNGFELSLPYYFNIAPNRDLTLTPRIISRRGVMTEATFRYLSPSYSGTFTANYLPDDRLAHRNRYAIYWQHQQNFGGGFGGYVYYNKVSDTTYPEDLGSTNQFVNGTQTLYQQEAGLTYNNGPWSVLARYQHWQTLPPSIAPYSREPQLNVKYTKYNVGGFDFGAEADYSRFRITTADATEGDRIVFNPYIAYGVYGPGYFVVPKVQYHFASYDLNYLSSTTPNSPKRFTESIPTVSFDTGLIFDRSVRLFGQDFIQTLEPRLYYVYTPYRDQSNAPLFDSAESDFGLAEIYQPNTFVGNDRIADANRITAGLTSRFIDPRTGDERARFVIAQQYYFADQRVTLNSGQSAVQARHSDLIVGAALKLGSGFMSETAFQYNQNNNQLVKSSVGFGYSPGERRVINVGYRYTRSNTTLDNQPINQFLISAQWPLTRRLYAIGRFNYDLAGDRVVDGLVGLQYDADCWALGVGVQRAANGINSSGQQNSSTRVMMQLTLKGLSTVDNGLVSAFRAGVPGYTPLPPPPPPMSRFSNYE</sequence>
<feature type="signal peptide" evidence="1">
    <location>
        <begin position="1"/>
        <end position="39"/>
    </location>
</feature>
<feature type="chain" id="PRO_0000281595" description="LPS-assembly protein LptD">
    <location>
        <begin position="40"/>
        <end position="786"/>
    </location>
</feature>
<feature type="region of interest" description="Disordered" evidence="2">
    <location>
        <begin position="767"/>
        <end position="786"/>
    </location>
</feature>
<feature type="compositionally biased region" description="Pro residues" evidence="2">
    <location>
        <begin position="770"/>
        <end position="779"/>
    </location>
</feature>
<dbReference type="EMBL" id="CP000151">
    <property type="protein sequence ID" value="ABB09632.1"/>
    <property type="molecule type" value="Genomic_DNA"/>
</dbReference>
<dbReference type="RefSeq" id="WP_011353143.1">
    <property type="nucleotide sequence ID" value="NC_007510.1"/>
</dbReference>
<dbReference type="SMR" id="Q39D34"/>
<dbReference type="GeneID" id="45095921"/>
<dbReference type="KEGG" id="bur:Bcep18194_A6038"/>
<dbReference type="PATRIC" id="fig|482957.22.peg.3038"/>
<dbReference type="HOGENOM" id="CLU_009039_0_0_4"/>
<dbReference type="Proteomes" id="UP000002705">
    <property type="component" value="Chromosome 1"/>
</dbReference>
<dbReference type="GO" id="GO:0009279">
    <property type="term" value="C:cell outer membrane"/>
    <property type="evidence" value="ECO:0007669"/>
    <property type="project" value="UniProtKB-SubCell"/>
</dbReference>
<dbReference type="GO" id="GO:1990351">
    <property type="term" value="C:transporter complex"/>
    <property type="evidence" value="ECO:0007669"/>
    <property type="project" value="TreeGrafter"/>
</dbReference>
<dbReference type="GO" id="GO:0043165">
    <property type="term" value="P:Gram-negative-bacterium-type cell outer membrane assembly"/>
    <property type="evidence" value="ECO:0007669"/>
    <property type="project" value="UniProtKB-UniRule"/>
</dbReference>
<dbReference type="GO" id="GO:0015920">
    <property type="term" value="P:lipopolysaccharide transport"/>
    <property type="evidence" value="ECO:0007669"/>
    <property type="project" value="InterPro"/>
</dbReference>
<dbReference type="HAMAP" id="MF_01411">
    <property type="entry name" value="LPS_assembly_LptD"/>
    <property type="match status" value="1"/>
</dbReference>
<dbReference type="InterPro" id="IPR020889">
    <property type="entry name" value="LipoPS_assembly_LptD"/>
</dbReference>
<dbReference type="InterPro" id="IPR050218">
    <property type="entry name" value="LptD"/>
</dbReference>
<dbReference type="InterPro" id="IPR007543">
    <property type="entry name" value="LptD_C"/>
</dbReference>
<dbReference type="PANTHER" id="PTHR30189">
    <property type="entry name" value="LPS-ASSEMBLY PROTEIN"/>
    <property type="match status" value="1"/>
</dbReference>
<dbReference type="PANTHER" id="PTHR30189:SF1">
    <property type="entry name" value="LPS-ASSEMBLY PROTEIN LPTD"/>
    <property type="match status" value="1"/>
</dbReference>
<dbReference type="Pfam" id="PF04453">
    <property type="entry name" value="LptD"/>
    <property type="match status" value="1"/>
</dbReference>
<accession>Q39D34</accession>
<gene>
    <name evidence="1" type="primary">lptD</name>
    <name type="synonym">imp</name>
    <name type="synonym">ostA</name>
    <name type="ordered locus">Bcep18194_A6038</name>
</gene>